<accession>B1KND9</accession>
<evidence type="ECO:0000255" key="1">
    <source>
        <dbReference type="HAMAP-Rule" id="MF_01830"/>
    </source>
</evidence>
<protein>
    <recommendedName>
        <fullName evidence="1">Putative hydro-lyase Swoo_1731</fullName>
        <ecNumber evidence="1">4.2.1.-</ecNumber>
    </recommendedName>
</protein>
<proteinExistence type="inferred from homology"/>
<gene>
    <name type="ordered locus">Swoo_1731</name>
</gene>
<feature type="chain" id="PRO_0000379864" description="Putative hydro-lyase Swoo_1731">
    <location>
        <begin position="1"/>
        <end position="269"/>
    </location>
</feature>
<keyword id="KW-0456">Lyase</keyword>
<keyword id="KW-1185">Reference proteome</keyword>
<organism>
    <name type="scientific">Shewanella woodyi (strain ATCC 51908 / MS32)</name>
    <dbReference type="NCBI Taxonomy" id="392500"/>
    <lineage>
        <taxon>Bacteria</taxon>
        <taxon>Pseudomonadati</taxon>
        <taxon>Pseudomonadota</taxon>
        <taxon>Gammaproteobacteria</taxon>
        <taxon>Alteromonadales</taxon>
        <taxon>Shewanellaceae</taxon>
        <taxon>Shewanella</taxon>
    </lineage>
</organism>
<reference key="1">
    <citation type="submission" date="2008-02" db="EMBL/GenBank/DDBJ databases">
        <title>Complete sequence of Shewanella woodyi ATCC 51908.</title>
        <authorList>
            <consortium name="US DOE Joint Genome Institute"/>
            <person name="Copeland A."/>
            <person name="Lucas S."/>
            <person name="Lapidus A."/>
            <person name="Glavina del Rio T."/>
            <person name="Dalin E."/>
            <person name="Tice H."/>
            <person name="Bruce D."/>
            <person name="Goodwin L."/>
            <person name="Pitluck S."/>
            <person name="Sims D."/>
            <person name="Brettin T."/>
            <person name="Detter J.C."/>
            <person name="Han C."/>
            <person name="Kuske C.R."/>
            <person name="Schmutz J."/>
            <person name="Larimer F."/>
            <person name="Land M."/>
            <person name="Hauser L."/>
            <person name="Kyrpides N."/>
            <person name="Lykidis A."/>
            <person name="Zhao J.-S."/>
            <person name="Richardson P."/>
        </authorList>
    </citation>
    <scope>NUCLEOTIDE SEQUENCE [LARGE SCALE GENOMIC DNA]</scope>
    <source>
        <strain>ATCC 51908 / MS32</strain>
    </source>
</reference>
<dbReference type="EC" id="4.2.1.-" evidence="1"/>
<dbReference type="EMBL" id="CP000961">
    <property type="protein sequence ID" value="ACA86016.1"/>
    <property type="molecule type" value="Genomic_DNA"/>
</dbReference>
<dbReference type="RefSeq" id="WP_012324362.1">
    <property type="nucleotide sequence ID" value="NC_010506.1"/>
</dbReference>
<dbReference type="SMR" id="B1KND9"/>
<dbReference type="STRING" id="392500.Swoo_1731"/>
<dbReference type="KEGG" id="swd:Swoo_1731"/>
<dbReference type="eggNOG" id="COG4336">
    <property type="taxonomic scope" value="Bacteria"/>
</dbReference>
<dbReference type="HOGENOM" id="CLU_059759_0_0_6"/>
<dbReference type="Proteomes" id="UP000002168">
    <property type="component" value="Chromosome"/>
</dbReference>
<dbReference type="GO" id="GO:0016829">
    <property type="term" value="F:lyase activity"/>
    <property type="evidence" value="ECO:0007669"/>
    <property type="project" value="UniProtKB-KW"/>
</dbReference>
<dbReference type="FunFam" id="3.30.2040.10:FF:000001">
    <property type="entry name" value="D-glutamate cyclase, mitochondrial"/>
    <property type="match status" value="1"/>
</dbReference>
<dbReference type="Gene3D" id="3.40.1640.10">
    <property type="entry name" value="PSTPO5379-like"/>
    <property type="match status" value="1"/>
</dbReference>
<dbReference type="Gene3D" id="3.30.2040.10">
    <property type="entry name" value="PSTPO5379-like domain"/>
    <property type="match status" value="1"/>
</dbReference>
<dbReference type="HAMAP" id="MF_01830">
    <property type="entry name" value="Hydro_lyase"/>
    <property type="match status" value="1"/>
</dbReference>
<dbReference type="InterPro" id="IPR009906">
    <property type="entry name" value="D-Glu_cyclase"/>
</dbReference>
<dbReference type="InterPro" id="IPR038021">
    <property type="entry name" value="Putative_hydro-lyase"/>
</dbReference>
<dbReference type="InterPro" id="IPR016938">
    <property type="entry name" value="UPF0317"/>
</dbReference>
<dbReference type="NCBIfam" id="NF003969">
    <property type="entry name" value="PRK05463.1"/>
    <property type="match status" value="1"/>
</dbReference>
<dbReference type="PANTHER" id="PTHR32022">
    <property type="entry name" value="D-GLUTAMATE CYCLASE, MITOCHONDRIAL"/>
    <property type="match status" value="1"/>
</dbReference>
<dbReference type="PANTHER" id="PTHR32022:SF10">
    <property type="entry name" value="D-GLUTAMATE CYCLASE, MITOCHONDRIAL"/>
    <property type="match status" value="1"/>
</dbReference>
<dbReference type="Pfam" id="PF07286">
    <property type="entry name" value="D-Glu_cyclase"/>
    <property type="match status" value="1"/>
</dbReference>
<dbReference type="PIRSF" id="PIRSF029755">
    <property type="entry name" value="UCP029755"/>
    <property type="match status" value="1"/>
</dbReference>
<dbReference type="SUPFAM" id="SSF160920">
    <property type="entry name" value="PSTPO5379-like"/>
    <property type="match status" value="1"/>
</dbReference>
<name>Y1731_SHEWM</name>
<comment type="similarity">
    <text evidence="1">Belongs to the D-glutamate cyclase family.</text>
</comment>
<sequence>MQKPVNNNFKESLLRTVESLRKSIRSGEMDDSTSGLVPGLVQANIVILPKIWAHDFLLFCQKNPIACPLIDVFDAGQFLLNSLGKDIDVRTDIPEYCVFVGGVKTEVKKDISDLWQDDFVVFALGCSFSFEYALQQAGLSIANLESNSNVSMYETNVPTKSVGVFQGNVVVSMRPFTPAQAIKAIQITSQFPLAHGAPIHIGKPEMIGINSLSNPSFGDSVEINEDHIPVFWGCGVTPQVVISNAKIPMFITHAPGKMLITDKLYSELR</sequence>